<organism>
    <name type="scientific">Lactobacillus johnsonii (strain CNCM I-12250 / La1 / NCC 533)</name>
    <dbReference type="NCBI Taxonomy" id="257314"/>
    <lineage>
        <taxon>Bacteria</taxon>
        <taxon>Bacillati</taxon>
        <taxon>Bacillota</taxon>
        <taxon>Bacilli</taxon>
        <taxon>Lactobacillales</taxon>
        <taxon>Lactobacillaceae</taxon>
        <taxon>Lactobacillus</taxon>
    </lineage>
</organism>
<dbReference type="EC" id="2.7.7.6" evidence="1"/>
<dbReference type="EMBL" id="AE017198">
    <property type="protein sequence ID" value="AAS08318.1"/>
    <property type="molecule type" value="Genomic_DNA"/>
</dbReference>
<dbReference type="SMR" id="Q74L95"/>
<dbReference type="KEGG" id="ljo:LJ_0332"/>
<dbReference type="eggNOG" id="COG0085">
    <property type="taxonomic scope" value="Bacteria"/>
</dbReference>
<dbReference type="HOGENOM" id="CLU_000524_4_1_9"/>
<dbReference type="Proteomes" id="UP000000581">
    <property type="component" value="Chromosome"/>
</dbReference>
<dbReference type="GO" id="GO:0000428">
    <property type="term" value="C:DNA-directed RNA polymerase complex"/>
    <property type="evidence" value="ECO:0007669"/>
    <property type="project" value="UniProtKB-KW"/>
</dbReference>
<dbReference type="GO" id="GO:0003677">
    <property type="term" value="F:DNA binding"/>
    <property type="evidence" value="ECO:0007669"/>
    <property type="project" value="UniProtKB-UniRule"/>
</dbReference>
<dbReference type="GO" id="GO:0003899">
    <property type="term" value="F:DNA-directed RNA polymerase activity"/>
    <property type="evidence" value="ECO:0007669"/>
    <property type="project" value="UniProtKB-UniRule"/>
</dbReference>
<dbReference type="GO" id="GO:0032549">
    <property type="term" value="F:ribonucleoside binding"/>
    <property type="evidence" value="ECO:0007669"/>
    <property type="project" value="InterPro"/>
</dbReference>
<dbReference type="GO" id="GO:0006351">
    <property type="term" value="P:DNA-templated transcription"/>
    <property type="evidence" value="ECO:0007669"/>
    <property type="project" value="UniProtKB-UniRule"/>
</dbReference>
<dbReference type="CDD" id="cd00653">
    <property type="entry name" value="RNA_pol_B_RPB2"/>
    <property type="match status" value="1"/>
</dbReference>
<dbReference type="FunFam" id="3.90.1800.10:FF:000001">
    <property type="entry name" value="DNA-directed RNA polymerase subunit beta"/>
    <property type="match status" value="1"/>
</dbReference>
<dbReference type="Gene3D" id="2.40.50.100">
    <property type="match status" value="1"/>
</dbReference>
<dbReference type="Gene3D" id="2.40.50.150">
    <property type="match status" value="1"/>
</dbReference>
<dbReference type="Gene3D" id="3.90.1100.10">
    <property type="match status" value="2"/>
</dbReference>
<dbReference type="Gene3D" id="2.30.150.10">
    <property type="entry name" value="DNA-directed RNA polymerase, beta subunit, external 1 domain"/>
    <property type="match status" value="1"/>
</dbReference>
<dbReference type="Gene3D" id="2.40.270.10">
    <property type="entry name" value="DNA-directed RNA polymerase, subunit 2, domain 6"/>
    <property type="match status" value="1"/>
</dbReference>
<dbReference type="Gene3D" id="3.90.1800.10">
    <property type="entry name" value="RNA polymerase alpha subunit dimerisation domain"/>
    <property type="match status" value="1"/>
</dbReference>
<dbReference type="Gene3D" id="3.90.1110.10">
    <property type="entry name" value="RNA polymerase Rpb2, domain 2"/>
    <property type="match status" value="1"/>
</dbReference>
<dbReference type="HAMAP" id="MF_01321">
    <property type="entry name" value="RNApol_bact_RpoB"/>
    <property type="match status" value="1"/>
</dbReference>
<dbReference type="InterPro" id="IPR042107">
    <property type="entry name" value="DNA-dir_RNA_pol_bsu_ext_1_sf"/>
</dbReference>
<dbReference type="InterPro" id="IPR019462">
    <property type="entry name" value="DNA-dir_RNA_pol_bsu_external_1"/>
</dbReference>
<dbReference type="InterPro" id="IPR015712">
    <property type="entry name" value="DNA-dir_RNA_pol_su2"/>
</dbReference>
<dbReference type="InterPro" id="IPR007120">
    <property type="entry name" value="DNA-dir_RNAP_su2_dom"/>
</dbReference>
<dbReference type="InterPro" id="IPR037033">
    <property type="entry name" value="DNA-dir_RNAP_su2_hyb_sf"/>
</dbReference>
<dbReference type="InterPro" id="IPR010243">
    <property type="entry name" value="RNA_pol_bsu_bac"/>
</dbReference>
<dbReference type="InterPro" id="IPR007121">
    <property type="entry name" value="RNA_pol_bsu_CS"/>
</dbReference>
<dbReference type="InterPro" id="IPR007644">
    <property type="entry name" value="RNA_pol_bsu_protrusion"/>
</dbReference>
<dbReference type="InterPro" id="IPR007642">
    <property type="entry name" value="RNA_pol_Rpb2_2"/>
</dbReference>
<dbReference type="InterPro" id="IPR037034">
    <property type="entry name" value="RNA_pol_Rpb2_2_sf"/>
</dbReference>
<dbReference type="InterPro" id="IPR007645">
    <property type="entry name" value="RNA_pol_Rpb2_3"/>
</dbReference>
<dbReference type="InterPro" id="IPR007641">
    <property type="entry name" value="RNA_pol_Rpb2_7"/>
</dbReference>
<dbReference type="InterPro" id="IPR014724">
    <property type="entry name" value="RNA_pol_RPB2_OB-fold"/>
</dbReference>
<dbReference type="NCBIfam" id="NF001616">
    <property type="entry name" value="PRK00405.1"/>
    <property type="match status" value="1"/>
</dbReference>
<dbReference type="NCBIfam" id="TIGR02013">
    <property type="entry name" value="rpoB"/>
    <property type="match status" value="1"/>
</dbReference>
<dbReference type="PANTHER" id="PTHR20856">
    <property type="entry name" value="DNA-DIRECTED RNA POLYMERASE I SUBUNIT 2"/>
    <property type="match status" value="1"/>
</dbReference>
<dbReference type="Pfam" id="PF04563">
    <property type="entry name" value="RNA_pol_Rpb2_1"/>
    <property type="match status" value="1"/>
</dbReference>
<dbReference type="Pfam" id="PF04561">
    <property type="entry name" value="RNA_pol_Rpb2_2"/>
    <property type="match status" value="2"/>
</dbReference>
<dbReference type="Pfam" id="PF04565">
    <property type="entry name" value="RNA_pol_Rpb2_3"/>
    <property type="match status" value="1"/>
</dbReference>
<dbReference type="Pfam" id="PF10385">
    <property type="entry name" value="RNA_pol_Rpb2_45"/>
    <property type="match status" value="1"/>
</dbReference>
<dbReference type="Pfam" id="PF00562">
    <property type="entry name" value="RNA_pol_Rpb2_6"/>
    <property type="match status" value="1"/>
</dbReference>
<dbReference type="Pfam" id="PF04560">
    <property type="entry name" value="RNA_pol_Rpb2_7"/>
    <property type="match status" value="1"/>
</dbReference>
<dbReference type="SUPFAM" id="SSF64484">
    <property type="entry name" value="beta and beta-prime subunits of DNA dependent RNA-polymerase"/>
    <property type="match status" value="1"/>
</dbReference>
<dbReference type="PROSITE" id="PS01166">
    <property type="entry name" value="RNA_POL_BETA"/>
    <property type="match status" value="1"/>
</dbReference>
<gene>
    <name evidence="1" type="primary">rpoB</name>
    <name type="ordered locus">LJ_0332</name>
</gene>
<proteinExistence type="inferred from homology"/>
<comment type="function">
    <text evidence="1">DNA-dependent RNA polymerase catalyzes the transcription of DNA into RNA using the four ribonucleoside triphosphates as substrates.</text>
</comment>
<comment type="catalytic activity">
    <reaction evidence="1">
        <text>RNA(n) + a ribonucleoside 5'-triphosphate = RNA(n+1) + diphosphate</text>
        <dbReference type="Rhea" id="RHEA:21248"/>
        <dbReference type="Rhea" id="RHEA-COMP:14527"/>
        <dbReference type="Rhea" id="RHEA-COMP:17342"/>
        <dbReference type="ChEBI" id="CHEBI:33019"/>
        <dbReference type="ChEBI" id="CHEBI:61557"/>
        <dbReference type="ChEBI" id="CHEBI:140395"/>
        <dbReference type="EC" id="2.7.7.6"/>
    </reaction>
</comment>
<comment type="subunit">
    <text evidence="1">The RNAP catalytic core consists of 2 alpha, 1 beta, 1 beta' and 1 omega subunit. When a sigma factor is associated with the core the holoenzyme is formed, which can initiate transcription.</text>
</comment>
<comment type="similarity">
    <text evidence="1">Belongs to the RNA polymerase beta chain family.</text>
</comment>
<name>RPOB_LACJO</name>
<protein>
    <recommendedName>
        <fullName evidence="1">DNA-directed RNA polymerase subunit beta</fullName>
        <shortName evidence="1">RNAP subunit beta</shortName>
        <ecNumber evidence="1">2.7.7.6</ecNumber>
    </recommendedName>
    <alternativeName>
        <fullName evidence="1">RNA polymerase subunit beta</fullName>
    </alternativeName>
    <alternativeName>
        <fullName evidence="1">Transcriptase subunit beta</fullName>
    </alternativeName>
</protein>
<sequence length="1209" mass="135814">MLGHAVNYGSHRTRRSFSRIKEVLKLPNLTDVQTQSYKWFLNEGIREMFDDIMPISDFSGKLSLEFVDYKLLKPKYTLEEARDHDANYSAPLHVTLKLTNHETGEIKTQDVFFGEFPLMTDSGTFVINGAERVIVSQLVRSPGVYYHSDFDKNGRQIFGATVIPNRGAWLEYETDAKDLAYVRIDRTRKLPLTVLIRALGFGSDSEIADMFGESDSIRFTLEKDIHKNPADSRVAEALKDIYERLRPGEPKTTDSSRSLLYARFFDPRRYDLAPVGRYKINKKLSLKNRLLRQTLAETLADPDTGEIIAKKGDVVTHELLDKLSPYLDRDDFKMVTYEPSKEGVLPDPVTVQEIKVYSKVDPERVVKLMSNGHIADDVKHLTPADVLASINYFFDLQDNIGTTDDIDHLGNRRIRRVGELLQNQFRIGLARMERVVRERMSIQDISTVTPQQLINIRPVVASVKEFFGSSQLSQFMDQNNPLGELTHKRRMSALGPGGLSRDRAGYEVRDVHYTHYGRLCPIETPEGPNIGLINSLATYAIVNKYGFIETPYRRVSWDTHKVTDKIDYLTADVEDNYIIAGANARLNEDGSFKDKIVLARHKEDNLEVTPDKIDYMDVIPKQVVSVTSACIPFLENDDSNRALMGANHQRQAVPLINPHAPIVGTGMEYRAAHDSGDALVAKAPGVVEYVDANEIRIRRDDDTLDKYVLEKFRRSNATKNYNQTPAVKQGERVVADEVIADGPAMENGELALGQNPIIAFLTWNMYNYEDAVMISERMVKDDVYTSIHIEDYESEARDTKLGPEEITREIPNVGEDALKDLDEEGIVRIGAEVQDGDILVGKVTPKGVTELSAEERLLHAIFGEKAREVRDTSLRVPHGGGGIVQNVQVFTREAGDELPPGVNKMVRVYIVQKRKIQVGDKMSGRHGNKGTIALVCPEEDMPYLPDGRPVDICLNPMGVPSRMNIGQVLELHLGIAAKQLGIHVATPVFDGASEDDMWNMVREAGIGKDGKTVLYDGRTGEPFHNRVSVGIMYYLKLTHMVDDKIHARSIGPYSLVTQQPLGGKAQFGGQRFGEMEVWALEAYGAAYTLQEILTYKSDDVVGRVKAYEAIVKGERIPKPGVPESFRVLVKELQSLGLDIKVLDMDHKEIELRDMDDDSNDHFNIDTLSKLAEQQEKKKLAEEAAKKDDKPDEPVDESDSSTSSDDKVSK</sequence>
<evidence type="ECO:0000255" key="1">
    <source>
        <dbReference type="HAMAP-Rule" id="MF_01321"/>
    </source>
</evidence>
<evidence type="ECO:0000256" key="2">
    <source>
        <dbReference type="SAM" id="MobiDB-lite"/>
    </source>
</evidence>
<keyword id="KW-0240">DNA-directed RNA polymerase</keyword>
<keyword id="KW-0548">Nucleotidyltransferase</keyword>
<keyword id="KW-0804">Transcription</keyword>
<keyword id="KW-0808">Transferase</keyword>
<feature type="chain" id="PRO_0000224065" description="DNA-directed RNA polymerase subunit beta">
    <location>
        <begin position="1"/>
        <end position="1209"/>
    </location>
</feature>
<feature type="region of interest" description="Disordered" evidence="2">
    <location>
        <begin position="1173"/>
        <end position="1209"/>
    </location>
</feature>
<feature type="compositionally biased region" description="Basic and acidic residues" evidence="2">
    <location>
        <begin position="1173"/>
        <end position="1192"/>
    </location>
</feature>
<accession>Q74L95</accession>
<reference key="1">
    <citation type="journal article" date="2004" name="Proc. Natl. Acad. Sci. U.S.A.">
        <title>The genome sequence of the probiotic intestinal bacterium Lactobacillus johnsonii NCC 533.</title>
        <authorList>
            <person name="Pridmore R.D."/>
            <person name="Berger B."/>
            <person name="Desiere F."/>
            <person name="Vilanova D."/>
            <person name="Barretto C."/>
            <person name="Pittet A.-C."/>
            <person name="Zwahlen M.-C."/>
            <person name="Rouvet M."/>
            <person name="Altermann E."/>
            <person name="Barrangou R."/>
            <person name="Mollet B."/>
            <person name="Mercenier A."/>
            <person name="Klaenhammer T."/>
            <person name="Arigoni F."/>
            <person name="Schell M.A."/>
        </authorList>
    </citation>
    <scope>NUCLEOTIDE SEQUENCE [LARGE SCALE GENOMIC DNA]</scope>
    <source>
        <strain>CNCM I-1225 / La1 / NCC 533</strain>
    </source>
</reference>